<reference key="1">
    <citation type="journal article" date="2000" name="Nature">
        <title>Sequence and analysis of chromosome 1 of the plant Arabidopsis thaliana.</title>
        <authorList>
            <person name="Theologis A."/>
            <person name="Ecker J.R."/>
            <person name="Palm C.J."/>
            <person name="Federspiel N.A."/>
            <person name="Kaul S."/>
            <person name="White O."/>
            <person name="Alonso J."/>
            <person name="Altafi H."/>
            <person name="Araujo R."/>
            <person name="Bowman C.L."/>
            <person name="Brooks S.Y."/>
            <person name="Buehler E."/>
            <person name="Chan A."/>
            <person name="Chao Q."/>
            <person name="Chen H."/>
            <person name="Cheuk R.F."/>
            <person name="Chin C.W."/>
            <person name="Chung M.K."/>
            <person name="Conn L."/>
            <person name="Conway A.B."/>
            <person name="Conway A.R."/>
            <person name="Creasy T.H."/>
            <person name="Dewar K."/>
            <person name="Dunn P."/>
            <person name="Etgu P."/>
            <person name="Feldblyum T.V."/>
            <person name="Feng J.-D."/>
            <person name="Fong B."/>
            <person name="Fujii C.Y."/>
            <person name="Gill J.E."/>
            <person name="Goldsmith A.D."/>
            <person name="Haas B."/>
            <person name="Hansen N.F."/>
            <person name="Hughes B."/>
            <person name="Huizar L."/>
            <person name="Hunter J.L."/>
            <person name="Jenkins J."/>
            <person name="Johnson-Hopson C."/>
            <person name="Khan S."/>
            <person name="Khaykin E."/>
            <person name="Kim C.J."/>
            <person name="Koo H.L."/>
            <person name="Kremenetskaia I."/>
            <person name="Kurtz D.B."/>
            <person name="Kwan A."/>
            <person name="Lam B."/>
            <person name="Langin-Hooper S."/>
            <person name="Lee A."/>
            <person name="Lee J.M."/>
            <person name="Lenz C.A."/>
            <person name="Li J.H."/>
            <person name="Li Y.-P."/>
            <person name="Lin X."/>
            <person name="Liu S.X."/>
            <person name="Liu Z.A."/>
            <person name="Luros J.S."/>
            <person name="Maiti R."/>
            <person name="Marziali A."/>
            <person name="Militscher J."/>
            <person name="Miranda M."/>
            <person name="Nguyen M."/>
            <person name="Nierman W.C."/>
            <person name="Osborne B.I."/>
            <person name="Pai G."/>
            <person name="Peterson J."/>
            <person name="Pham P.K."/>
            <person name="Rizzo M."/>
            <person name="Rooney T."/>
            <person name="Rowley D."/>
            <person name="Sakano H."/>
            <person name="Salzberg S.L."/>
            <person name="Schwartz J.R."/>
            <person name="Shinn P."/>
            <person name="Southwick A.M."/>
            <person name="Sun H."/>
            <person name="Tallon L.J."/>
            <person name="Tambunga G."/>
            <person name="Toriumi M.J."/>
            <person name="Town C.D."/>
            <person name="Utterback T."/>
            <person name="Van Aken S."/>
            <person name="Vaysberg M."/>
            <person name="Vysotskaia V.S."/>
            <person name="Walker M."/>
            <person name="Wu D."/>
            <person name="Yu G."/>
            <person name="Fraser C.M."/>
            <person name="Venter J.C."/>
            <person name="Davis R.W."/>
        </authorList>
    </citation>
    <scope>NUCLEOTIDE SEQUENCE [LARGE SCALE GENOMIC DNA]</scope>
    <source>
        <strain>cv. Columbia</strain>
    </source>
</reference>
<reference key="2">
    <citation type="journal article" date="2017" name="Plant J.">
        <title>Araport11: a complete reannotation of the Arabidopsis thaliana reference genome.</title>
        <authorList>
            <person name="Cheng C.Y."/>
            <person name="Krishnakumar V."/>
            <person name="Chan A.P."/>
            <person name="Thibaud-Nissen F."/>
            <person name="Schobel S."/>
            <person name="Town C.D."/>
        </authorList>
    </citation>
    <scope>GENOME REANNOTATION</scope>
    <source>
        <strain>cv. Columbia</strain>
    </source>
</reference>
<reference key="3">
    <citation type="journal article" date="2003" name="Science">
        <title>Empirical analysis of transcriptional activity in the Arabidopsis genome.</title>
        <authorList>
            <person name="Yamada K."/>
            <person name="Lim J."/>
            <person name="Dale J.M."/>
            <person name="Chen H."/>
            <person name="Shinn P."/>
            <person name="Palm C.J."/>
            <person name="Southwick A.M."/>
            <person name="Wu H.C."/>
            <person name="Kim C.J."/>
            <person name="Nguyen M."/>
            <person name="Pham P.K."/>
            <person name="Cheuk R.F."/>
            <person name="Karlin-Newmann G."/>
            <person name="Liu S.X."/>
            <person name="Lam B."/>
            <person name="Sakano H."/>
            <person name="Wu T."/>
            <person name="Yu G."/>
            <person name="Miranda M."/>
            <person name="Quach H.L."/>
            <person name="Tripp M."/>
            <person name="Chang C.H."/>
            <person name="Lee J.M."/>
            <person name="Toriumi M.J."/>
            <person name="Chan M.M."/>
            <person name="Tang C.C."/>
            <person name="Onodera C.S."/>
            <person name="Deng J.M."/>
            <person name="Akiyama K."/>
            <person name="Ansari Y."/>
            <person name="Arakawa T."/>
            <person name="Banh J."/>
            <person name="Banno F."/>
            <person name="Bowser L."/>
            <person name="Brooks S.Y."/>
            <person name="Carninci P."/>
            <person name="Chao Q."/>
            <person name="Choy N."/>
            <person name="Enju A."/>
            <person name="Goldsmith A.D."/>
            <person name="Gurjal M."/>
            <person name="Hansen N.F."/>
            <person name="Hayashizaki Y."/>
            <person name="Johnson-Hopson C."/>
            <person name="Hsuan V.W."/>
            <person name="Iida K."/>
            <person name="Karnes M."/>
            <person name="Khan S."/>
            <person name="Koesema E."/>
            <person name="Ishida J."/>
            <person name="Jiang P.X."/>
            <person name="Jones T."/>
            <person name="Kawai J."/>
            <person name="Kamiya A."/>
            <person name="Meyers C."/>
            <person name="Nakajima M."/>
            <person name="Narusaka M."/>
            <person name="Seki M."/>
            <person name="Sakurai T."/>
            <person name="Satou M."/>
            <person name="Tamse R."/>
            <person name="Vaysberg M."/>
            <person name="Wallender E.K."/>
            <person name="Wong C."/>
            <person name="Yamamura Y."/>
            <person name="Yuan S."/>
            <person name="Shinozaki K."/>
            <person name="Davis R.W."/>
            <person name="Theologis A."/>
            <person name="Ecker J.R."/>
        </authorList>
    </citation>
    <scope>NUCLEOTIDE SEQUENCE [LARGE SCALE MRNA]</scope>
    <source>
        <strain>cv. Columbia</strain>
    </source>
</reference>
<reference key="4">
    <citation type="submission" date="2002-03" db="EMBL/GenBank/DDBJ databases">
        <title>Full-length cDNA from Arabidopsis thaliana.</title>
        <authorList>
            <person name="Brover V.V."/>
            <person name="Troukhan M.E."/>
            <person name="Alexandrov N.A."/>
            <person name="Lu Y.-P."/>
            <person name="Flavell R.B."/>
            <person name="Feldmann K.A."/>
        </authorList>
    </citation>
    <scope>NUCLEOTIDE SEQUENCE [LARGE SCALE MRNA]</scope>
</reference>
<accession>Q93ZX1</accession>
<accession>Q9XI09</accession>
<feature type="chain" id="PRO_0000422632" description="Replication factor C subunit 4">
    <location>
        <begin position="1"/>
        <end position="339"/>
    </location>
</feature>
<feature type="binding site" evidence="2">
    <location>
        <begin position="49"/>
        <end position="56"/>
    </location>
    <ligand>
        <name>ATP</name>
        <dbReference type="ChEBI" id="CHEBI:30616"/>
    </ligand>
</feature>
<keyword id="KW-0025">Alternative splicing</keyword>
<keyword id="KW-0067">ATP-binding</keyword>
<keyword id="KW-0235">DNA replication</keyword>
<keyword id="KW-0238">DNA-binding</keyword>
<keyword id="KW-0547">Nucleotide-binding</keyword>
<keyword id="KW-0539">Nucleus</keyword>
<keyword id="KW-1185">Reference proteome</keyword>
<name>RFC4_ARATH</name>
<organism>
    <name type="scientific">Arabidopsis thaliana</name>
    <name type="common">Mouse-ear cress</name>
    <dbReference type="NCBI Taxonomy" id="3702"/>
    <lineage>
        <taxon>Eukaryota</taxon>
        <taxon>Viridiplantae</taxon>
        <taxon>Streptophyta</taxon>
        <taxon>Embryophyta</taxon>
        <taxon>Tracheophyta</taxon>
        <taxon>Spermatophyta</taxon>
        <taxon>Magnoliopsida</taxon>
        <taxon>eudicotyledons</taxon>
        <taxon>Gunneridae</taxon>
        <taxon>Pentapetalae</taxon>
        <taxon>rosids</taxon>
        <taxon>malvids</taxon>
        <taxon>Brassicales</taxon>
        <taxon>Brassicaceae</taxon>
        <taxon>Camelineae</taxon>
        <taxon>Arabidopsis</taxon>
    </lineage>
</organism>
<gene>
    <name type="primary">RFC4</name>
    <name type="synonym">EMB1968</name>
    <name type="ordered locus">At1g21690</name>
    <name type="ORF">F8K7.11</name>
</gene>
<protein>
    <recommendedName>
        <fullName>Replication factor C subunit 4</fullName>
        <shortName>AtRFC4</shortName>
    </recommendedName>
    <alternativeName>
        <fullName>Activator 1 subunit 4</fullName>
    </alternativeName>
    <alternativeName>
        <fullName>Protein EMBRYO DEFECTIVE 1968</fullName>
    </alternativeName>
</protein>
<evidence type="ECO:0000250" key="1"/>
<evidence type="ECO:0000255" key="2"/>
<evidence type="ECO:0000305" key="3"/>
<comment type="function">
    <text evidence="1">May be involved in DNA replication and thus regulate cell proliferation.</text>
</comment>
<comment type="subunit">
    <text evidence="1">Heterotetramer of subunits RFC2, RFC3, RFC4 and RFC5 that can form a complex with RFC1.</text>
</comment>
<comment type="interaction">
    <interactant intactId="EBI-4470690">
        <id>Q93ZX1</id>
    </interactant>
    <interactant intactId="EBI-25512239">
        <id>Q9ZR37</id>
        <label>DSPTP1</label>
    </interactant>
    <organismsDiffer>false</organismsDiffer>
    <experiments>3</experiments>
</comment>
<comment type="interaction">
    <interactant intactId="EBI-4470690">
        <id>Q93ZX1</id>
    </interactant>
    <interactant intactId="EBI-1392127">
        <id>P93002</id>
        <label>NPR1</label>
    </interactant>
    <organismsDiffer>false</organismsDiffer>
    <experiments>3</experiments>
</comment>
<comment type="interaction">
    <interactant intactId="EBI-4470690">
        <id>Q93ZX1</id>
    </interactant>
    <interactant intactId="EBI-4441365">
        <id>Q8L746</id>
        <label>NPR3</label>
    </interactant>
    <organismsDiffer>false</organismsDiffer>
    <experiments>3</experiments>
</comment>
<comment type="interaction">
    <interactant intactId="EBI-4470690">
        <id>Q93ZX1</id>
    </interactant>
    <interactant intactId="EBI-4466887">
        <id>Q9LVQ0</id>
        <label>PME31</label>
    </interactant>
    <organismsDiffer>false</organismsDiffer>
    <experiments>4</experiments>
</comment>
<comment type="interaction">
    <interactant intactId="EBI-4470690">
        <id>Q93ZX1</id>
    </interactant>
    <interactant intactId="EBI-1645478">
        <id>Q38845</id>
        <label>PP2AA1</label>
    </interactant>
    <organismsDiffer>false</organismsDiffer>
    <experiments>3</experiments>
</comment>
<comment type="interaction">
    <interactant intactId="EBI-4470690">
        <id>Q93ZX1</id>
    </interactant>
    <interactant intactId="EBI-25513346">
        <id>Q9CAQ8</id>
        <label>RFC5</label>
    </interactant>
    <organismsDiffer>false</organismsDiffer>
    <experiments>7</experiments>
</comment>
<comment type="interaction">
    <interactant intactId="EBI-4470690">
        <id>Q93ZX1</id>
    </interactant>
    <interactant intactId="EBI-15192297">
        <id>Q9LQF0</id>
        <label>TCP23</label>
    </interactant>
    <organismsDiffer>false</organismsDiffer>
    <experiments>3</experiments>
</comment>
<comment type="interaction">
    <interactant intactId="EBI-4470690">
        <id>Q93ZX1</id>
    </interactant>
    <interactant intactId="EBI-15193683">
        <id>Q5CCK4</id>
        <label>VAL2</label>
    </interactant>
    <organismsDiffer>false</organismsDiffer>
    <experiments>3</experiments>
</comment>
<comment type="subcellular location">
    <subcellularLocation>
        <location evidence="1">Nucleus</location>
    </subcellularLocation>
</comment>
<comment type="alternative products">
    <event type="alternative splicing"/>
    <isoform>
        <id>Q93ZX1-1</id>
        <name>1</name>
        <sequence type="displayed"/>
    </isoform>
    <text>A number of isoforms are produced. According to EST sequences.</text>
</comment>
<comment type="similarity">
    <text evidence="3">Belongs to the activator 1 small subunits family.</text>
</comment>
<comment type="sequence caution" evidence="3">
    <conflict type="erroneous gene model prediction">
        <sequence resource="EMBL-CDS" id="AAD41422"/>
    </conflict>
</comment>
<sequence>MAPVLQSSQPWVEKYRPKQVKDVAHQEEVVRVLTNTLQTADCPHMLFYGPPGTGKTTTALAIAHQLFGPELYKSRVLELNASDDRGINVVRTKIKDFAAVAVGSNHRQSGYPCPSFKIIILDEADSMTEDAQNALRRTMETYSKVTRFFFICNYISRIIEPLASRCAKFRFKPLSEEVMSNRILHICNEEGLSLDGEALSTLSSISQGDLRRAITYLQSATRLFGSTITSTDLLNVSGVVPLEVVNKLFTACKSGDFDIANKEVDNIVAEGYPASQIINQLFDIVAEADSDITDMQKAKICKCLAETDKRLVDGADEYLQLLDVASSTICALSEMAQDF</sequence>
<dbReference type="EMBL" id="AC007727">
    <property type="protein sequence ID" value="AAD41422.1"/>
    <property type="status" value="ALT_SEQ"/>
    <property type="molecule type" value="Genomic_DNA"/>
</dbReference>
<dbReference type="EMBL" id="CP002684">
    <property type="protein sequence ID" value="AEE30139.1"/>
    <property type="molecule type" value="Genomic_DNA"/>
</dbReference>
<dbReference type="EMBL" id="AY056210">
    <property type="protein sequence ID" value="AAL07059.1"/>
    <property type="molecule type" value="mRNA"/>
</dbReference>
<dbReference type="EMBL" id="AY062637">
    <property type="protein sequence ID" value="AAL32715.1"/>
    <property type="molecule type" value="mRNA"/>
</dbReference>
<dbReference type="EMBL" id="BT010368">
    <property type="protein sequence ID" value="AAQ56811.1"/>
    <property type="molecule type" value="mRNA"/>
</dbReference>
<dbReference type="EMBL" id="AY084702">
    <property type="protein sequence ID" value="AAM61276.1"/>
    <property type="molecule type" value="mRNA"/>
</dbReference>
<dbReference type="PIR" id="B86350">
    <property type="entry name" value="B86350"/>
</dbReference>
<dbReference type="RefSeq" id="NP_564148.1">
    <molecule id="Q93ZX1-1"/>
    <property type="nucleotide sequence ID" value="NM_102018.4"/>
</dbReference>
<dbReference type="SMR" id="Q93ZX1"/>
<dbReference type="BioGRID" id="24010">
    <property type="interactions" value="9"/>
</dbReference>
<dbReference type="FunCoup" id="Q93ZX1">
    <property type="interactions" value="3077"/>
</dbReference>
<dbReference type="IntAct" id="Q93ZX1">
    <property type="interactions" value="8"/>
</dbReference>
<dbReference type="STRING" id="3702.Q93ZX1"/>
<dbReference type="PaxDb" id="3702-AT1G21690.3"/>
<dbReference type="EnsemblPlants" id="AT1G21690.1">
    <molecule id="Q93ZX1-1"/>
    <property type="protein sequence ID" value="AT1G21690.1"/>
    <property type="gene ID" value="AT1G21690"/>
</dbReference>
<dbReference type="GeneID" id="838771"/>
<dbReference type="Gramene" id="AT1G21690.1">
    <molecule id="Q93ZX1-1"/>
    <property type="protein sequence ID" value="AT1G21690.1"/>
    <property type="gene ID" value="AT1G21690"/>
</dbReference>
<dbReference type="KEGG" id="ath:AT1G21690"/>
<dbReference type="Araport" id="AT1G21690"/>
<dbReference type="TAIR" id="AT1G21690">
    <property type="gene designation" value="EMB1968"/>
</dbReference>
<dbReference type="eggNOG" id="KOG0989">
    <property type="taxonomic scope" value="Eukaryota"/>
</dbReference>
<dbReference type="InParanoid" id="Q93ZX1"/>
<dbReference type="OMA" id="GCQSGSF"/>
<dbReference type="OrthoDB" id="4199794at2759"/>
<dbReference type="PhylomeDB" id="Q93ZX1"/>
<dbReference type="CD-CODE" id="4299E36E">
    <property type="entry name" value="Nucleolus"/>
</dbReference>
<dbReference type="PRO" id="PR:Q93ZX1"/>
<dbReference type="Proteomes" id="UP000006548">
    <property type="component" value="Chromosome 1"/>
</dbReference>
<dbReference type="ExpressionAtlas" id="Q93ZX1">
    <property type="expression patterns" value="baseline and differential"/>
</dbReference>
<dbReference type="GO" id="GO:0005634">
    <property type="term" value="C:nucleus"/>
    <property type="evidence" value="ECO:0007669"/>
    <property type="project" value="UniProtKB-SubCell"/>
</dbReference>
<dbReference type="GO" id="GO:0005524">
    <property type="term" value="F:ATP binding"/>
    <property type="evidence" value="ECO:0007669"/>
    <property type="project" value="UniProtKB-KW"/>
</dbReference>
<dbReference type="GO" id="GO:0016887">
    <property type="term" value="F:ATP hydrolysis activity"/>
    <property type="evidence" value="ECO:0007669"/>
    <property type="project" value="InterPro"/>
</dbReference>
<dbReference type="GO" id="GO:0003677">
    <property type="term" value="F:DNA binding"/>
    <property type="evidence" value="ECO:0007669"/>
    <property type="project" value="UniProtKB-KW"/>
</dbReference>
<dbReference type="GO" id="GO:0006260">
    <property type="term" value="P:DNA replication"/>
    <property type="evidence" value="ECO:0007669"/>
    <property type="project" value="UniProtKB-KW"/>
</dbReference>
<dbReference type="CDD" id="cd00009">
    <property type="entry name" value="AAA"/>
    <property type="match status" value="1"/>
</dbReference>
<dbReference type="CDD" id="cd18140">
    <property type="entry name" value="HLD_clamp_RFC"/>
    <property type="match status" value="1"/>
</dbReference>
<dbReference type="FunFam" id="1.10.8.60:FF:000032">
    <property type="entry name" value="Replication factor C subunit 4"/>
    <property type="match status" value="1"/>
</dbReference>
<dbReference type="FunFam" id="1.20.272.10:FF:000016">
    <property type="entry name" value="Replication factor C subunit 4"/>
    <property type="match status" value="1"/>
</dbReference>
<dbReference type="FunFam" id="3.40.50.300:FF:000129">
    <property type="entry name" value="Replication factor C subunit 5"/>
    <property type="match status" value="1"/>
</dbReference>
<dbReference type="Gene3D" id="1.10.8.60">
    <property type="match status" value="1"/>
</dbReference>
<dbReference type="Gene3D" id="1.20.272.10">
    <property type="match status" value="1"/>
</dbReference>
<dbReference type="Gene3D" id="3.40.50.300">
    <property type="entry name" value="P-loop containing nucleotide triphosphate hydrolases"/>
    <property type="match status" value="1"/>
</dbReference>
<dbReference type="InterPro" id="IPR003593">
    <property type="entry name" value="AAA+_ATPase"/>
</dbReference>
<dbReference type="InterPro" id="IPR003959">
    <property type="entry name" value="ATPase_AAA_core"/>
</dbReference>
<dbReference type="InterPro" id="IPR008921">
    <property type="entry name" value="DNA_pol3_clamp-load_cplx_C"/>
</dbReference>
<dbReference type="InterPro" id="IPR050238">
    <property type="entry name" value="DNA_Rep/Repair_Clamp_Loader"/>
</dbReference>
<dbReference type="InterPro" id="IPR027417">
    <property type="entry name" value="P-loop_NTPase"/>
</dbReference>
<dbReference type="InterPro" id="IPR013748">
    <property type="entry name" value="Rep_factorC_C"/>
</dbReference>
<dbReference type="InterPro" id="IPR047854">
    <property type="entry name" value="RFC_lid"/>
</dbReference>
<dbReference type="NCBIfam" id="NF001679">
    <property type="entry name" value="PRK00440.1"/>
    <property type="match status" value="1"/>
</dbReference>
<dbReference type="PANTHER" id="PTHR11669">
    <property type="entry name" value="REPLICATION FACTOR C / DNA POLYMERASE III GAMMA-TAU SUBUNIT"/>
    <property type="match status" value="1"/>
</dbReference>
<dbReference type="PANTHER" id="PTHR11669:SF20">
    <property type="entry name" value="REPLICATION FACTOR C SUBUNIT 4"/>
    <property type="match status" value="1"/>
</dbReference>
<dbReference type="Pfam" id="PF00004">
    <property type="entry name" value="AAA"/>
    <property type="match status" value="1"/>
</dbReference>
<dbReference type="Pfam" id="PF21960">
    <property type="entry name" value="RCF1-5-like_lid"/>
    <property type="match status" value="1"/>
</dbReference>
<dbReference type="Pfam" id="PF08542">
    <property type="entry name" value="Rep_fac_C"/>
    <property type="match status" value="1"/>
</dbReference>
<dbReference type="SMART" id="SM00382">
    <property type="entry name" value="AAA"/>
    <property type="match status" value="1"/>
</dbReference>
<dbReference type="SUPFAM" id="SSF52540">
    <property type="entry name" value="P-loop containing nucleoside triphosphate hydrolases"/>
    <property type="match status" value="1"/>
</dbReference>
<dbReference type="SUPFAM" id="SSF48019">
    <property type="entry name" value="post-AAA+ oligomerization domain-like"/>
    <property type="match status" value="1"/>
</dbReference>
<proteinExistence type="evidence at protein level"/>